<accession>A8WP91</accession>
<dbReference type="EC" id="1.3.8.7"/>
<dbReference type="EMBL" id="HE600951">
    <property type="protein sequence ID" value="CAP22297.2"/>
    <property type="molecule type" value="Genomic_DNA"/>
</dbReference>
<dbReference type="RefSeq" id="XP_045091698.1">
    <property type="nucleotide sequence ID" value="XM_045241672.1"/>
</dbReference>
<dbReference type="SMR" id="A8WP91"/>
<dbReference type="STRING" id="6238.A8WP91"/>
<dbReference type="GeneID" id="8573320"/>
<dbReference type="WormBase" id="CBG00953">
    <property type="protein sequence ID" value="CBP46189"/>
    <property type="gene ID" value="WBGene00024257"/>
</dbReference>
<dbReference type="eggNOG" id="KOG0140">
    <property type="taxonomic scope" value="Eukaryota"/>
</dbReference>
<dbReference type="HOGENOM" id="CLU_018204_0_2_1"/>
<dbReference type="InParanoid" id="A8WP91"/>
<dbReference type="OMA" id="KYDLAEH"/>
<dbReference type="UniPathway" id="UPA00660"/>
<dbReference type="Proteomes" id="UP000008549">
    <property type="component" value="Unassembled WGS sequence"/>
</dbReference>
<dbReference type="GO" id="GO:0005737">
    <property type="term" value="C:cytoplasm"/>
    <property type="evidence" value="ECO:0000318"/>
    <property type="project" value="GO_Central"/>
</dbReference>
<dbReference type="GO" id="GO:0005759">
    <property type="term" value="C:mitochondrial matrix"/>
    <property type="evidence" value="ECO:0007669"/>
    <property type="project" value="UniProtKB-SubCell"/>
</dbReference>
<dbReference type="GO" id="GO:0005739">
    <property type="term" value="C:mitochondrion"/>
    <property type="evidence" value="ECO:0000318"/>
    <property type="project" value="GO_Central"/>
</dbReference>
<dbReference type="GO" id="GO:0050660">
    <property type="term" value="F:flavin adenine dinucleotide binding"/>
    <property type="evidence" value="ECO:0007669"/>
    <property type="project" value="InterPro"/>
</dbReference>
<dbReference type="GO" id="GO:0070991">
    <property type="term" value="F:medium-chain fatty acyl-CoA dehydrogenase activity"/>
    <property type="evidence" value="ECO:0000318"/>
    <property type="project" value="GO_Central"/>
</dbReference>
<dbReference type="GO" id="GO:0051793">
    <property type="term" value="P:medium-chain fatty acid catabolic process"/>
    <property type="evidence" value="ECO:0000318"/>
    <property type="project" value="GO_Central"/>
</dbReference>
<dbReference type="FunFam" id="1.10.540.10:FF:000010">
    <property type="entry name" value="Medium-chain specific acyl-CoA dehydrogenase, mitochondrial"/>
    <property type="match status" value="1"/>
</dbReference>
<dbReference type="FunFam" id="1.20.140.10:FF:000011">
    <property type="entry name" value="Medium-chain specific acyl-CoA dehydrogenase, mitochondrial"/>
    <property type="match status" value="1"/>
</dbReference>
<dbReference type="FunFam" id="2.40.110.10:FF:000007">
    <property type="entry name" value="Medium-chain specific acyl-CoA dehydrogenase, mitochondrial"/>
    <property type="match status" value="1"/>
</dbReference>
<dbReference type="Gene3D" id="1.10.540.10">
    <property type="entry name" value="Acyl-CoA dehydrogenase/oxidase, N-terminal domain"/>
    <property type="match status" value="1"/>
</dbReference>
<dbReference type="Gene3D" id="2.40.110.10">
    <property type="entry name" value="Butyryl-CoA Dehydrogenase, subunit A, domain 2"/>
    <property type="match status" value="1"/>
</dbReference>
<dbReference type="Gene3D" id="1.20.140.10">
    <property type="entry name" value="Butyryl-CoA Dehydrogenase, subunit A, domain 3"/>
    <property type="match status" value="1"/>
</dbReference>
<dbReference type="InterPro" id="IPR006089">
    <property type="entry name" value="Acyl-CoA_DH_CS"/>
</dbReference>
<dbReference type="InterPro" id="IPR006091">
    <property type="entry name" value="Acyl-CoA_Oxase/DH_mid-dom"/>
</dbReference>
<dbReference type="InterPro" id="IPR046373">
    <property type="entry name" value="Acyl-CoA_Oxase/DH_mid-dom_sf"/>
</dbReference>
<dbReference type="InterPro" id="IPR036250">
    <property type="entry name" value="AcylCo_DH-like_C"/>
</dbReference>
<dbReference type="InterPro" id="IPR009075">
    <property type="entry name" value="AcylCo_DH/oxidase_C"/>
</dbReference>
<dbReference type="InterPro" id="IPR013786">
    <property type="entry name" value="AcylCoA_DH/ox_N"/>
</dbReference>
<dbReference type="InterPro" id="IPR037069">
    <property type="entry name" value="AcylCoA_DH/ox_N_sf"/>
</dbReference>
<dbReference type="InterPro" id="IPR009100">
    <property type="entry name" value="AcylCoA_DH/oxidase_NM_dom_sf"/>
</dbReference>
<dbReference type="PANTHER" id="PTHR43884">
    <property type="entry name" value="ACYL-COA DEHYDROGENASE"/>
    <property type="match status" value="1"/>
</dbReference>
<dbReference type="PANTHER" id="PTHR43884:SF12">
    <property type="entry name" value="ISOVALERYL-COA DEHYDROGENASE, MITOCHONDRIAL-RELATED"/>
    <property type="match status" value="1"/>
</dbReference>
<dbReference type="Pfam" id="PF00441">
    <property type="entry name" value="Acyl-CoA_dh_1"/>
    <property type="match status" value="1"/>
</dbReference>
<dbReference type="Pfam" id="PF02770">
    <property type="entry name" value="Acyl-CoA_dh_M"/>
    <property type="match status" value="1"/>
</dbReference>
<dbReference type="Pfam" id="PF02771">
    <property type="entry name" value="Acyl-CoA_dh_N"/>
    <property type="match status" value="1"/>
</dbReference>
<dbReference type="SUPFAM" id="SSF47203">
    <property type="entry name" value="Acyl-CoA dehydrogenase C-terminal domain-like"/>
    <property type="match status" value="1"/>
</dbReference>
<dbReference type="SUPFAM" id="SSF56645">
    <property type="entry name" value="Acyl-CoA dehydrogenase NM domain-like"/>
    <property type="match status" value="1"/>
</dbReference>
<dbReference type="PROSITE" id="PS00072">
    <property type="entry name" value="ACYL_COA_DH_1"/>
    <property type="match status" value="1"/>
</dbReference>
<gene>
    <name type="ORF">CBG00953</name>
</gene>
<evidence type="ECO:0000250" key="1">
    <source>
        <dbReference type="UniProtKB" id="P11310"/>
    </source>
</evidence>
<evidence type="ECO:0000250" key="2">
    <source>
        <dbReference type="UniProtKB" id="Q22347"/>
    </source>
</evidence>
<evidence type="ECO:0000255" key="3"/>
<evidence type="ECO:0000312" key="4">
    <source>
        <dbReference type="EMBL" id="CAP22297.2"/>
    </source>
</evidence>
<reference evidence="4" key="1">
    <citation type="journal article" date="2003" name="PLoS Biol.">
        <title>The genome sequence of Caenorhabditis briggsae: a platform for comparative genomics.</title>
        <authorList>
            <person name="Stein L.D."/>
            <person name="Bao Z."/>
            <person name="Blasiar D."/>
            <person name="Blumenthal T."/>
            <person name="Brent M.R."/>
            <person name="Chen N."/>
            <person name="Chinwalla A."/>
            <person name="Clarke L."/>
            <person name="Clee C."/>
            <person name="Coghlan A."/>
            <person name="Coulson A."/>
            <person name="D'Eustachio P."/>
            <person name="Fitch D.H.A."/>
            <person name="Fulton L.A."/>
            <person name="Fulton R.E."/>
            <person name="Griffiths-Jones S."/>
            <person name="Harris T.W."/>
            <person name="Hillier L.W."/>
            <person name="Kamath R."/>
            <person name="Kuwabara P.E."/>
            <person name="Mardis E.R."/>
            <person name="Marra M.A."/>
            <person name="Miner T.L."/>
            <person name="Minx P."/>
            <person name="Mullikin J.C."/>
            <person name="Plumb R.W."/>
            <person name="Rogers J."/>
            <person name="Schein J.E."/>
            <person name="Sohrmann M."/>
            <person name="Spieth J."/>
            <person name="Stajich J.E."/>
            <person name="Wei C."/>
            <person name="Willey D."/>
            <person name="Wilson R.K."/>
            <person name="Durbin R.M."/>
            <person name="Waterston R.H."/>
        </authorList>
    </citation>
    <scope>NUCLEOTIDE SEQUENCE [LARGE SCALE GENOMIC DNA]</scope>
    <source>
        <strain>AF16</strain>
    </source>
</reference>
<sequence>MLSRLARTQISRSALLSQTRQLSFDLNETQKEIQAAALKFSKEVLVPNAAKFDESGEFPWEIIRQAHSLGLMNPQIPEKYGGPGMTTLETTLIVEALSYGCTGLQLGIMGPSLAIAPVYIAGNEEQKKKYLGALAAEPIIASYCVTEPGAGSDVNGVKTKCEKKGNEYIINGSKAWITGGGHAKWFFVLARSDPNPKTPAGKAFTAFIVDGDTSGITRGKKEKNMGQRCSDTRTITFEDVRVPEENVLGPPGAGFKVAMSAFDMTRPGVAAGALGLSWRCLDESAKYALQRKAFGTEIANHQAVQFMLSDMAINLELARLITYKSATDVDNGVRSSYNASKSASQRIPRIRRLLMLFRCNGFNSEYPVEKLMRDAKIYQIYEGTSQIQRIVISRMLLGHVAQNGTSRM</sequence>
<comment type="function">
    <text evidence="1">This enzyme is specific for acyl chain lengths of 4 to 16.</text>
</comment>
<comment type="catalytic activity">
    <reaction>
        <text>a medium-chain 2,3-saturated fatty acyl-CoA + oxidized [electron-transfer flavoprotein] + H(+) = a medium-chain (2E)-enoyl-CoA + reduced [electron-transfer flavoprotein]</text>
        <dbReference type="Rhea" id="RHEA:14477"/>
        <dbReference type="Rhea" id="RHEA-COMP:10685"/>
        <dbReference type="Rhea" id="RHEA-COMP:10686"/>
        <dbReference type="ChEBI" id="CHEBI:15378"/>
        <dbReference type="ChEBI" id="CHEBI:57692"/>
        <dbReference type="ChEBI" id="CHEBI:58307"/>
        <dbReference type="ChEBI" id="CHEBI:83723"/>
        <dbReference type="ChEBI" id="CHEBI:83726"/>
        <dbReference type="EC" id="1.3.8.7"/>
    </reaction>
</comment>
<comment type="cofactor">
    <cofactor evidence="1">
        <name>FAD</name>
        <dbReference type="ChEBI" id="CHEBI:57692"/>
    </cofactor>
</comment>
<comment type="pathway">
    <text evidence="1">Lipid metabolism; mitochondrial fatty acid beta-oxidation.</text>
</comment>
<comment type="subunit">
    <text evidence="1">Homotetramer.</text>
</comment>
<comment type="subcellular location">
    <subcellularLocation>
        <location evidence="1">Mitochondrion matrix</location>
    </subcellularLocation>
</comment>
<comment type="similarity">
    <text evidence="3">Belongs to the acyl-CoA dehydrogenase family.</text>
</comment>
<organism>
    <name type="scientific">Caenorhabditis briggsae</name>
    <dbReference type="NCBI Taxonomy" id="6238"/>
    <lineage>
        <taxon>Eukaryota</taxon>
        <taxon>Metazoa</taxon>
        <taxon>Ecdysozoa</taxon>
        <taxon>Nematoda</taxon>
        <taxon>Chromadorea</taxon>
        <taxon>Rhabditida</taxon>
        <taxon>Rhabditina</taxon>
        <taxon>Rhabditomorpha</taxon>
        <taxon>Rhabditoidea</taxon>
        <taxon>Rhabditidae</taxon>
        <taxon>Peloderinae</taxon>
        <taxon>Caenorhabditis</taxon>
    </lineage>
</organism>
<keyword id="KW-0274">FAD</keyword>
<keyword id="KW-0276">Fatty acid metabolism</keyword>
<keyword id="KW-0285">Flavoprotein</keyword>
<keyword id="KW-0443">Lipid metabolism</keyword>
<keyword id="KW-0496">Mitochondrion</keyword>
<keyword id="KW-0560">Oxidoreductase</keyword>
<keyword id="KW-1185">Reference proteome</keyword>
<keyword id="KW-0809">Transit peptide</keyword>
<name>ACAD2_CAEBR</name>
<proteinExistence type="inferred from homology"/>
<feature type="transit peptide" description="Mitochondrion" evidence="3">
    <location>
        <begin position="1"/>
        <end position="5"/>
    </location>
</feature>
<feature type="chain" id="PRO_0000395328" description="Probable medium-chain specific acyl-CoA dehydrogenase 2, mitochondrial" evidence="2">
    <location>
        <begin position="6"/>
        <end position="408"/>
    </location>
</feature>
<feature type="active site" description="Proton acceptor" evidence="1">
    <location>
        <position position="382"/>
    </location>
</feature>
<feature type="binding site" evidence="1">
    <location>
        <begin position="143"/>
        <end position="152"/>
    </location>
    <ligand>
        <name>FAD</name>
        <dbReference type="ChEBI" id="CHEBI:57692"/>
    </ligand>
</feature>
<feature type="binding site" evidence="1">
    <location>
        <position position="152"/>
    </location>
    <ligand>
        <name>substrate</name>
    </ligand>
</feature>
<feature type="binding site" evidence="1">
    <location>
        <begin position="176"/>
        <end position="178"/>
    </location>
    <ligand>
        <name>FAD</name>
        <dbReference type="ChEBI" id="CHEBI:57692"/>
    </ligand>
</feature>
<feature type="binding site" evidence="1">
    <location>
        <begin position="263"/>
        <end position="266"/>
    </location>
    <ligand>
        <name>substrate</name>
    </ligand>
</feature>
<feature type="binding site" evidence="1">
    <location>
        <begin position="291"/>
        <end position="293"/>
    </location>
    <ligand>
        <name>FAD</name>
        <dbReference type="ChEBI" id="CHEBI:57692"/>
    </ligand>
</feature>
<feature type="binding site" evidence="1">
    <location>
        <begin position="301"/>
        <end position="302"/>
    </location>
    <ligand>
        <name>FAD</name>
        <dbReference type="ChEBI" id="CHEBI:57692"/>
    </ligand>
</feature>
<feature type="binding site" evidence="1">
    <location>
        <begin position="355"/>
        <end position="359"/>
    </location>
    <ligand>
        <name>FAD</name>
        <dbReference type="ChEBI" id="CHEBI:57692"/>
    </ligand>
</feature>
<feature type="binding site" evidence="1">
    <location>
        <position position="383"/>
    </location>
    <ligand>
        <name>substrate</name>
    </ligand>
</feature>
<feature type="binding site" evidence="1">
    <location>
        <begin position="384"/>
        <end position="386"/>
    </location>
    <ligand>
        <name>FAD</name>
        <dbReference type="ChEBI" id="CHEBI:57692"/>
    </ligand>
</feature>
<feature type="binding site" evidence="1">
    <location>
        <position position="394"/>
    </location>
    <ligand>
        <name>substrate</name>
    </ligand>
</feature>
<protein>
    <recommendedName>
        <fullName evidence="2">Probable medium-chain specific acyl-CoA dehydrogenase 2, mitochondrial</fullName>
        <shortName evidence="2">MCAD</shortName>
        <ecNumber>1.3.8.7</ecNumber>
    </recommendedName>
</protein>